<gene>
    <name type="primary">virB6</name>
    <name type="ordered locus">BAB2_0063</name>
</gene>
<feature type="chain" id="PRO_0000290180" description="Type IV secretion system protein VirB6">
    <location>
        <begin position="1"/>
        <end position="347"/>
    </location>
</feature>
<feature type="transmembrane region" description="Helical" evidence="1">
    <location>
        <begin position="32"/>
        <end position="52"/>
    </location>
</feature>
<feature type="transmembrane region" description="Helical" evidence="1">
    <location>
        <begin position="61"/>
        <end position="81"/>
    </location>
</feature>
<feature type="transmembrane region" description="Helical" evidence="1">
    <location>
        <begin position="153"/>
        <end position="173"/>
    </location>
</feature>
<feature type="transmembrane region" description="Helical" evidence="1">
    <location>
        <begin position="177"/>
        <end position="197"/>
    </location>
</feature>
<feature type="transmembrane region" description="Helical" evidence="1">
    <location>
        <begin position="205"/>
        <end position="225"/>
    </location>
</feature>
<feature type="transmembrane region" description="Helical" evidence="1">
    <location>
        <begin position="245"/>
        <end position="265"/>
    </location>
</feature>
<feature type="transmembrane region" description="Helical" evidence="1">
    <location>
        <begin position="270"/>
        <end position="290"/>
    </location>
</feature>
<reference key="1">
    <citation type="journal article" date="2000" name="J. Bacteriol.">
        <title>A homologue of an operon required for DNA transfer in Agrobacterium is required in Brucella abortus for virulence and intracellular multiplication.</title>
        <authorList>
            <person name="Sieira R."/>
            <person name="Comerci D.J."/>
            <person name="Sanchez D.O."/>
            <person name="Ugalde R.A."/>
        </authorList>
    </citation>
    <scope>NUCLEOTIDE SEQUENCE [GENOMIC DNA]</scope>
    <scope>TRANSCRIPTION</scope>
    <scope>FUNCTION</scope>
</reference>
<reference key="2">
    <citation type="journal article" date="2005" name="Infect. Immun.">
        <title>Whole-genome analyses of speciation events in pathogenic Brucellae.</title>
        <authorList>
            <person name="Chain P.S."/>
            <person name="Comerci D.J."/>
            <person name="Tolmasky M.E."/>
            <person name="Larimer F.W."/>
            <person name="Malfatti S.A."/>
            <person name="Vergez L.M."/>
            <person name="Aguero F."/>
            <person name="Land M.L."/>
            <person name="Ugalde R.A."/>
            <person name="Garcia E."/>
        </authorList>
    </citation>
    <scope>NUCLEOTIDE SEQUENCE [LARGE SCALE GENOMIC DNA]</scope>
    <source>
        <strain>2308</strain>
    </source>
</reference>
<comment type="function">
    <text evidence="2">The virB operon is essential for intracellular survival and is not involved in the invasion process. Constitutes a major determinant of virulence in mice.</text>
</comment>
<comment type="subcellular location">
    <subcellularLocation>
        <location evidence="3">Cell inner membrane</location>
        <topology evidence="3">Multi-pass membrane protein</topology>
    </subcellularLocation>
</comment>
<comment type="miscellaneous">
    <text>Transcription is turned on at the beginning of the stationary phase of vegetative growth.</text>
</comment>
<comment type="similarity">
    <text evidence="3">Belongs to the TrbL/VirB6 family.</text>
</comment>
<sequence>MVNPVIFEFIGTSIHNQLNNYVTMVASNTMNMIATTAVLAGGLYYTAMGILMSVGRIEGPFSQLVISCIKFMLIAAFALNISTYSEWVIDTVHNMESGFADAFAGNHGTPSSTIYQTLDNSLGKGWNIAAMLFEKGDNRGLTQIVQGFSELLLSFLVAGSTLILAGPTGAMIVATNAVIAILLGIGPLFILALGWAPTRGFFDRWFGAIVTSILQVALLSAVLSISSAIFSRMVAAINLASATQSTLFSCLSLTAVTIVMPYMMYKVYEYGGILGSSISAATISLGSLAVNTATSGGGAMTSIFSGSSGGGGSGSAKAGGESSYSAGGNAMWSPAYRQHVLGQFNRD</sequence>
<proteinExistence type="inferred from homology"/>
<name>VIRB6_BRUA2</name>
<dbReference type="EMBL" id="AF226278">
    <property type="protein sequence ID" value="AAF73899.1"/>
    <property type="molecule type" value="Genomic_DNA"/>
</dbReference>
<dbReference type="EMBL" id="AM040265">
    <property type="protein sequence ID" value="CAJ12229.1"/>
    <property type="molecule type" value="Genomic_DNA"/>
</dbReference>
<dbReference type="RefSeq" id="WP_002969266.1">
    <property type="nucleotide sequence ID" value="NZ_KN046823.1"/>
</dbReference>
<dbReference type="SMR" id="Q2YJ76"/>
<dbReference type="STRING" id="359391.BAB2_0063"/>
<dbReference type="KEGG" id="bmf:BAB2_0063"/>
<dbReference type="PATRIC" id="fig|359391.11.peg.2010"/>
<dbReference type="HOGENOM" id="CLU_065797_0_0_5"/>
<dbReference type="PhylomeDB" id="Q2YJ76"/>
<dbReference type="BioCyc" id="MetaCyc:BAB_RS26660-MONOMER"/>
<dbReference type="Proteomes" id="UP000002719">
    <property type="component" value="Chromosome II"/>
</dbReference>
<dbReference type="GO" id="GO:0005886">
    <property type="term" value="C:plasma membrane"/>
    <property type="evidence" value="ECO:0007669"/>
    <property type="project" value="UniProtKB-SubCell"/>
</dbReference>
<dbReference type="GO" id="GO:0030255">
    <property type="term" value="P:protein secretion by the type IV secretion system"/>
    <property type="evidence" value="ECO:0007669"/>
    <property type="project" value="InterPro"/>
</dbReference>
<dbReference type="InterPro" id="IPR007688">
    <property type="entry name" value="Conjugal_tfr_TrbL/VirB6"/>
</dbReference>
<dbReference type="Pfam" id="PF04610">
    <property type="entry name" value="TrbL"/>
    <property type="match status" value="1"/>
</dbReference>
<organism>
    <name type="scientific">Brucella abortus (strain 2308)</name>
    <dbReference type="NCBI Taxonomy" id="359391"/>
    <lineage>
        <taxon>Bacteria</taxon>
        <taxon>Pseudomonadati</taxon>
        <taxon>Pseudomonadota</taxon>
        <taxon>Alphaproteobacteria</taxon>
        <taxon>Hyphomicrobiales</taxon>
        <taxon>Brucellaceae</taxon>
        <taxon>Brucella/Ochrobactrum group</taxon>
        <taxon>Brucella</taxon>
    </lineage>
</organism>
<protein>
    <recommendedName>
        <fullName>Type IV secretion system protein VirB6</fullName>
    </recommendedName>
</protein>
<accession>Q2YJ76</accession>
<accession>Q57A19</accession>
<accession>Q9KIS7</accession>
<keyword id="KW-0997">Cell inner membrane</keyword>
<keyword id="KW-1003">Cell membrane</keyword>
<keyword id="KW-0472">Membrane</keyword>
<keyword id="KW-1185">Reference proteome</keyword>
<keyword id="KW-0812">Transmembrane</keyword>
<keyword id="KW-1133">Transmembrane helix</keyword>
<keyword id="KW-0843">Virulence</keyword>
<evidence type="ECO:0000255" key="1"/>
<evidence type="ECO:0000269" key="2">
    <source>
    </source>
</evidence>
<evidence type="ECO:0000305" key="3"/>